<protein>
    <recommendedName>
        <fullName evidence="6">Alpha-conotoxin-like Sm1.1</fullName>
    </recommendedName>
    <component>
        <recommendedName>
            <fullName evidence="6">Alpha-conotoxin-like Sm1.1 b</fullName>
        </recommendedName>
    </component>
</protein>
<organism>
    <name type="scientific">Conus stercusmuscarum</name>
    <name type="common">Fly-specked cone</name>
    <dbReference type="NCBI Taxonomy" id="89452"/>
    <lineage>
        <taxon>Eukaryota</taxon>
        <taxon>Metazoa</taxon>
        <taxon>Spiralia</taxon>
        <taxon>Lophotrochozoa</taxon>
        <taxon>Mollusca</taxon>
        <taxon>Gastropoda</taxon>
        <taxon>Caenogastropoda</taxon>
        <taxon>Neogastropoda</taxon>
        <taxon>Conoidea</taxon>
        <taxon>Conidae</taxon>
        <taxon>Conus</taxon>
        <taxon>Pionoconus</taxon>
    </lineage>
</organism>
<dbReference type="ConoServer" id="2981">
    <property type="toxin name" value="Sm1.1 precursor"/>
</dbReference>
<dbReference type="GO" id="GO:0005576">
    <property type="term" value="C:extracellular region"/>
    <property type="evidence" value="ECO:0007669"/>
    <property type="project" value="UniProtKB-SubCell"/>
</dbReference>
<dbReference type="GO" id="GO:0035792">
    <property type="term" value="C:host cell postsynaptic membrane"/>
    <property type="evidence" value="ECO:0007669"/>
    <property type="project" value="UniProtKB-KW"/>
</dbReference>
<dbReference type="GO" id="GO:0030550">
    <property type="term" value="F:acetylcholine receptor inhibitor activity"/>
    <property type="evidence" value="ECO:0007669"/>
    <property type="project" value="UniProtKB-KW"/>
</dbReference>
<dbReference type="GO" id="GO:0099106">
    <property type="term" value="F:ion channel regulator activity"/>
    <property type="evidence" value="ECO:0007669"/>
    <property type="project" value="UniProtKB-KW"/>
</dbReference>
<dbReference type="GO" id="GO:0090729">
    <property type="term" value="F:toxin activity"/>
    <property type="evidence" value="ECO:0007669"/>
    <property type="project" value="UniProtKB-KW"/>
</dbReference>
<dbReference type="InterPro" id="IPR009958">
    <property type="entry name" value="Conotoxin_a-typ"/>
</dbReference>
<dbReference type="InterPro" id="IPR018072">
    <property type="entry name" value="Conotoxin_a-typ_CS"/>
</dbReference>
<dbReference type="Pfam" id="PF07365">
    <property type="entry name" value="Toxin_8"/>
    <property type="match status" value="1"/>
</dbReference>
<dbReference type="PROSITE" id="PS60014">
    <property type="entry name" value="ALPHA_CONOTOXIN"/>
    <property type="match status" value="1"/>
</dbReference>
<name>CA11_CONSE</name>
<evidence type="ECO:0000250" key="1"/>
<evidence type="ECO:0000250" key="2">
    <source>
        <dbReference type="UniProtKB" id="P01519"/>
    </source>
</evidence>
<evidence type="ECO:0000255" key="3"/>
<evidence type="ECO:0000256" key="4">
    <source>
        <dbReference type="SAM" id="MobiDB-lite"/>
    </source>
</evidence>
<evidence type="ECO:0000269" key="5">
    <source>
    </source>
</evidence>
<evidence type="ECO:0000305" key="6"/>
<evidence type="ECO:0000305" key="7">
    <source>
    </source>
</evidence>
<sequence>MFTVFLLVVLATTVVSFPSDRASDGRDDEAKDERSDMHESGRKGRGRCCHPACGPNYSCGR</sequence>
<keyword id="KW-0008">Acetylcholine receptor inhibiting toxin</keyword>
<keyword id="KW-0027">Amidation</keyword>
<keyword id="KW-1015">Disulfide bond</keyword>
<keyword id="KW-0379">Hydroxylation</keyword>
<keyword id="KW-0872">Ion channel impairing toxin</keyword>
<keyword id="KW-0528">Neurotoxin</keyword>
<keyword id="KW-0629">Postsynaptic neurotoxin</keyword>
<keyword id="KW-0964">Secreted</keyword>
<keyword id="KW-0732">Signal</keyword>
<keyword id="KW-0800">Toxin</keyword>
<comment type="function">
    <text evidence="1">Alpha-conotoxins act on postsynaptic membranes, they bind to the nicotinic acetylcholine receptors (nAChR) and thus inhibit them.</text>
</comment>
<comment type="subcellular location">
    <subcellularLocation>
        <location evidence="5">Secreted</location>
    </subcellularLocation>
</comment>
<comment type="tissue specificity">
    <text evidence="7">Expressed by the venom duct.</text>
</comment>
<comment type="domain">
    <text evidence="6">The cysteine framework is I (CC-C-C). Alpha3/5 pattern.</text>
</comment>
<comment type="similarity">
    <text evidence="6">Belongs to the conotoxin A superfamily.</text>
</comment>
<feature type="signal peptide" evidence="3">
    <location>
        <begin position="1"/>
        <end position="16"/>
    </location>
</feature>
<feature type="propeptide" id="PRO_0000366070" evidence="7">
    <location>
        <begin position="17"/>
        <end position="43"/>
    </location>
</feature>
<feature type="peptide" id="PRO_0000366071" description="Alpha-conotoxin-like Sm1.1" evidence="7">
    <location>
        <begin position="46"/>
        <end position="59"/>
    </location>
</feature>
<feature type="peptide" id="PRO_0000445111" description="Alpha-conotoxin-like Sm1.1 b" evidence="7">
    <location>
        <begin position="48"/>
        <end position="59"/>
    </location>
</feature>
<feature type="region of interest" description="Disordered" evidence="4">
    <location>
        <begin position="19"/>
        <end position="46"/>
    </location>
</feature>
<feature type="compositionally biased region" description="Basic and acidic residues" evidence="4">
    <location>
        <begin position="21"/>
        <end position="42"/>
    </location>
</feature>
<feature type="modified residue" description="4-hydroxyproline; partial" evidence="5">
    <location>
        <position position="55"/>
    </location>
</feature>
<feature type="modified residue" description="Cysteine amide" evidence="5">
    <location>
        <position position="59"/>
    </location>
</feature>
<feature type="disulfide bond" evidence="2">
    <location>
        <begin position="48"/>
        <end position="53"/>
    </location>
</feature>
<feature type="disulfide bond" evidence="2">
    <location>
        <begin position="49"/>
        <end position="59"/>
    </location>
</feature>
<reference key="1">
    <citation type="journal article" date="2006" name="J. Biol. Chem.">
        <title>Conus peptides: biodiversity-based discovery and exogenomics.</title>
        <authorList>
            <person name="Olivera B.M."/>
        </authorList>
    </citation>
    <scope>NUCLEOTIDE SEQUENCE [MRNA]</scope>
    <scope>REVIEW</scope>
    <source>
        <tissue>Venom duct</tissue>
    </source>
</reference>
<reference key="2">
    <citation type="journal article" date="2012" name="J. Proteome Res.">
        <title>Constrained de novo sequencing of conotoxins.</title>
        <authorList>
            <person name="Bhatia S."/>
            <person name="Kil Y.J."/>
            <person name="Ueberheide B."/>
            <person name="Chait B.T."/>
            <person name="Tayo L."/>
            <person name="Cruz L."/>
            <person name="Lu B."/>
            <person name="Yates J.R. III"/>
            <person name="Bern M."/>
        </authorList>
    </citation>
    <scope>IDENTIFICATION BY MASS SPECTROMETRY</scope>
    <scope>SUBCELLULAR LOCATION</scope>
    <scope>HYDROXYLATION AT PRO-55</scope>
    <scope>AMIDATION AT CYS-59</scope>
    <source>
        <tissue>Venom</tissue>
    </source>
</reference>
<proteinExistence type="evidence at protein level"/>
<accession>P0C8V1</accession>